<accession>P69267</accession>
<accession>P26133</accession>
<protein>
    <recommendedName>
        <fullName evidence="1">Nuclear export protein</fullName>
        <shortName evidence="1">NEP</shortName>
    </recommendedName>
    <alternativeName>
        <fullName evidence="1">Non-structural protein 2</fullName>
        <shortName evidence="1">NS2</shortName>
    </alternativeName>
</protein>
<gene>
    <name evidence="1" type="primary">NS</name>
</gene>
<feature type="chain" id="PRO_0000078994" description="Nuclear export protein">
    <location>
        <begin position="1"/>
        <end position="121"/>
    </location>
</feature>
<feature type="short sequence motif" description="Nuclear export signal" evidence="1">
    <location>
        <begin position="12"/>
        <end position="21"/>
    </location>
</feature>
<feature type="short sequence motif" description="Nuclear export signal" evidence="1">
    <location>
        <begin position="85"/>
        <end position="94"/>
    </location>
</feature>
<proteinExistence type="inferred from homology"/>
<evidence type="ECO:0000255" key="1">
    <source>
        <dbReference type="HAMAP-Rule" id="MF_04067"/>
    </source>
</evidence>
<sequence>MDPNTVSSFQDILMRMSKMQLGSSSEDLNGMITQFESLKLYRDSLGEAVMRMGDLHSLQNRNGKWREQLGQKFEEIRWLIEEVRHKLKITENSFEQITFIQALQLLFEVEQEIRTFSFQLI</sequence>
<organismHost>
    <name type="scientific">Aves</name>
    <dbReference type="NCBI Taxonomy" id="8782"/>
</organismHost>
<organismHost>
    <name type="scientific">Homo sapiens</name>
    <name type="common">Human</name>
    <dbReference type="NCBI Taxonomy" id="9606"/>
</organismHost>
<organism>
    <name type="scientific">Influenza A virus (strain A/Leningrad/134/47/1957 H2N2)</name>
    <dbReference type="NCBI Taxonomy" id="380983"/>
    <lineage>
        <taxon>Viruses</taxon>
        <taxon>Riboviria</taxon>
        <taxon>Orthornavirae</taxon>
        <taxon>Negarnaviricota</taxon>
        <taxon>Polyploviricotina</taxon>
        <taxon>Insthoviricetes</taxon>
        <taxon>Articulavirales</taxon>
        <taxon>Orthomyxoviridae</taxon>
        <taxon>Alphainfluenzavirus</taxon>
        <taxon>Alphainfluenzavirus influenzae</taxon>
        <taxon>Influenza A virus</taxon>
    </lineage>
</organism>
<dbReference type="EMBL" id="M81584">
    <property type="protein sequence ID" value="AAA19202.1"/>
    <property type="molecule type" value="Unassigned_RNA"/>
</dbReference>
<dbReference type="SMR" id="P69267"/>
<dbReference type="GO" id="GO:0042025">
    <property type="term" value="C:host cell nucleus"/>
    <property type="evidence" value="ECO:0007669"/>
    <property type="project" value="UniProtKB-SubCell"/>
</dbReference>
<dbReference type="GO" id="GO:0044423">
    <property type="term" value="C:virion component"/>
    <property type="evidence" value="ECO:0007669"/>
    <property type="project" value="UniProtKB-UniRule"/>
</dbReference>
<dbReference type="GO" id="GO:0039675">
    <property type="term" value="P:exit of virus from host cell nucleus through nuclear pore"/>
    <property type="evidence" value="ECO:0007669"/>
    <property type="project" value="UniProtKB-UniRule"/>
</dbReference>
<dbReference type="Gene3D" id="1.10.287.230">
    <property type="match status" value="1"/>
</dbReference>
<dbReference type="Gene3D" id="1.10.287.10">
    <property type="entry name" value="S15/NS1, RNA-binding"/>
    <property type="match status" value="1"/>
</dbReference>
<dbReference type="HAMAP" id="MF_04067">
    <property type="entry name" value="INFV_NEP"/>
    <property type="match status" value="1"/>
</dbReference>
<dbReference type="InterPro" id="IPR000968">
    <property type="entry name" value="Flu_NS2"/>
</dbReference>
<dbReference type="Pfam" id="PF00601">
    <property type="entry name" value="Flu_NS2"/>
    <property type="match status" value="1"/>
</dbReference>
<dbReference type="SUPFAM" id="SSF101156">
    <property type="entry name" value="Nonstructural protein ns2, Nep, M1-binding domain"/>
    <property type="match status" value="1"/>
</dbReference>
<reference key="1">
    <citation type="journal article" date="1992" name="Virology">
        <title>Sequence changes in the live attenuated, cold-adapted variants of influenza A/Leningrad/134/57 (H2N2) virus.</title>
        <authorList>
            <person name="Klimov A.I."/>
            <person name="Cox N.J."/>
            <person name="Yotov W.V."/>
            <person name="Rocha E."/>
            <person name="Alexandrova G.I."/>
            <person name="Kendal A.P."/>
        </authorList>
    </citation>
    <scope>NUCLEOTIDE SEQUENCE</scope>
</reference>
<name>NEP_I57A3</name>
<keyword id="KW-0025">Alternative splicing</keyword>
<keyword id="KW-1048">Host nucleus</keyword>
<keyword id="KW-0945">Host-virus interaction</keyword>
<keyword id="KW-0813">Transport</keyword>
<keyword id="KW-0946">Virion</keyword>
<comment type="function">
    <text evidence="1">Mediates the nuclear export of encapsidated genomic RNAs (ribonucleoproteins, RNPs). Acts as an adapter between viral RNPs complexes and the nuclear export machinery of the cell. Possesses no intrinsic RNA-binding activity, but includes a C-terminal M1-binding domain. This domain is believed to allow recognition of RNPs bound to the protein M1. Since protein M1 is not available in large quantities before late stages of infection, such an indirect recognition mechanism probably ensures that genomic RNPs are not exported from the host nucleus until sufficient quantities of viral mRNA and progeny genomic RNA have been synthesized. Furthermore, the RNPs enter the host cytoplasm only when associated with the M1 protein that is necessary to guide them to the plasma membrane. May down-regulate viral RNA synthesis when overproduced.</text>
</comment>
<comment type="subunit">
    <text evidence="1">Interacts with protein M1. May interact with host nucleoporin RAB/HRB and exportin XPO1/CRM1.</text>
</comment>
<comment type="subcellular location">
    <subcellularLocation>
        <location evidence="1">Virion</location>
    </subcellularLocation>
    <subcellularLocation>
        <location evidence="1">Host nucleus</location>
    </subcellularLocation>
</comment>
<comment type="alternative products">
    <event type="alternative splicing"/>
    <isoform>
        <id>P69267-1</id>
        <name>NEP</name>
        <name>NS2</name>
        <sequence type="displayed"/>
    </isoform>
    <isoform>
        <id>P69274-1</id>
        <name>NS1</name>
        <sequence type="external"/>
    </isoform>
</comment>
<comment type="miscellaneous">
    <text>Average number present in a viral particle is estimated to be 130-200 molecules.</text>
</comment>
<comment type="similarity">
    <text evidence="1">Belongs to the influenza viruses NEP family.</text>
</comment>